<proteinExistence type="inferred from homology"/>
<feature type="chain" id="PRO_0000155172" description="Phosphate-specific transport system accessory protein PhoU homolog 1">
    <location>
        <begin position="1"/>
        <end position="221"/>
    </location>
</feature>
<dbReference type="EMBL" id="LT708304">
    <property type="protein sequence ID" value="SIU01958.1"/>
    <property type="molecule type" value="Genomic_DNA"/>
</dbReference>
<dbReference type="RefSeq" id="NP_856974.1">
    <property type="nucleotide sequence ID" value="NC_002945.3"/>
</dbReference>
<dbReference type="SMR" id="P65719"/>
<dbReference type="KEGG" id="mbo:BQ2027_MB3329C"/>
<dbReference type="PATRIC" id="fig|233413.5.peg.3659"/>
<dbReference type="Proteomes" id="UP000001419">
    <property type="component" value="Chromosome"/>
</dbReference>
<dbReference type="GO" id="GO:0005737">
    <property type="term" value="C:cytoplasm"/>
    <property type="evidence" value="ECO:0000250"/>
    <property type="project" value="UniProtKB"/>
</dbReference>
<dbReference type="GO" id="GO:0042803">
    <property type="term" value="F:protein homodimerization activity"/>
    <property type="evidence" value="ECO:0000250"/>
    <property type="project" value="UniProtKB"/>
</dbReference>
<dbReference type="GO" id="GO:0030643">
    <property type="term" value="P:intracellular phosphate ion homeostasis"/>
    <property type="evidence" value="ECO:0007669"/>
    <property type="project" value="InterPro"/>
</dbReference>
<dbReference type="GO" id="GO:0045936">
    <property type="term" value="P:negative regulation of phosphate metabolic process"/>
    <property type="evidence" value="ECO:0000250"/>
    <property type="project" value="UniProtKB"/>
</dbReference>
<dbReference type="GO" id="GO:2000186">
    <property type="term" value="P:negative regulation of phosphate transmembrane transport"/>
    <property type="evidence" value="ECO:0000250"/>
    <property type="project" value="UniProtKB"/>
</dbReference>
<dbReference type="GO" id="GO:0006817">
    <property type="term" value="P:phosphate ion transport"/>
    <property type="evidence" value="ECO:0007669"/>
    <property type="project" value="UniProtKB-KW"/>
</dbReference>
<dbReference type="FunFam" id="1.20.58.220:FF:000004">
    <property type="entry name" value="Phosphate-specific transport system accessory protein PhoU"/>
    <property type="match status" value="1"/>
</dbReference>
<dbReference type="Gene3D" id="1.20.58.220">
    <property type="entry name" value="Phosphate transport system protein phou homolog 2, domain 2"/>
    <property type="match status" value="1"/>
</dbReference>
<dbReference type="InterPro" id="IPR028366">
    <property type="entry name" value="P_transport_PhoU"/>
</dbReference>
<dbReference type="InterPro" id="IPR038078">
    <property type="entry name" value="PhoU-like_sf"/>
</dbReference>
<dbReference type="InterPro" id="IPR026022">
    <property type="entry name" value="PhoU_dom"/>
</dbReference>
<dbReference type="NCBIfam" id="TIGR02135">
    <property type="entry name" value="phoU_full"/>
    <property type="match status" value="1"/>
</dbReference>
<dbReference type="PANTHER" id="PTHR42930">
    <property type="entry name" value="PHOSPHATE-SPECIFIC TRANSPORT SYSTEM ACCESSORY PROTEIN PHOU"/>
    <property type="match status" value="1"/>
</dbReference>
<dbReference type="PANTHER" id="PTHR42930:SF3">
    <property type="entry name" value="PHOSPHATE-SPECIFIC TRANSPORT SYSTEM ACCESSORY PROTEIN PHOU"/>
    <property type="match status" value="1"/>
</dbReference>
<dbReference type="Pfam" id="PF01895">
    <property type="entry name" value="PhoU"/>
    <property type="match status" value="2"/>
</dbReference>
<dbReference type="PIRSF" id="PIRSF003107">
    <property type="entry name" value="PhoU"/>
    <property type="match status" value="1"/>
</dbReference>
<dbReference type="SUPFAM" id="SSF109755">
    <property type="entry name" value="PhoU-like"/>
    <property type="match status" value="1"/>
</dbReference>
<comment type="function">
    <text evidence="1">Plays a role in the regulation of phosphate uptake. In this role, it may bind, possibly as a chaperone, to PhoR, PhoP or a PhoR-PhoP complex to promote dephosphorylation of phospho-PhoP, or inhibit formation of the PhoR-PhoP transitory complex (By similarity).</text>
</comment>
<comment type="subunit">
    <text evidence="1">Homodimer.</text>
</comment>
<comment type="subcellular location">
    <subcellularLocation>
        <location evidence="1">Cytoplasm</location>
    </subcellularLocation>
</comment>
<comment type="similarity">
    <text evidence="2">Belongs to the PhoU family.</text>
</comment>
<keyword id="KW-0963">Cytoplasm</keyword>
<keyword id="KW-0592">Phosphate transport</keyword>
<keyword id="KW-1185">Reference proteome</keyword>
<keyword id="KW-0813">Transport</keyword>
<evidence type="ECO:0000250" key="1"/>
<evidence type="ECO:0000305" key="2"/>
<gene>
    <name type="primary">phoU1</name>
    <name type="synonym">phoY1</name>
    <name type="ordered locus">BQ2027_MB3329C</name>
</gene>
<reference key="1">
    <citation type="journal article" date="2003" name="Proc. Natl. Acad. Sci. U.S.A.">
        <title>The complete genome sequence of Mycobacterium bovis.</title>
        <authorList>
            <person name="Garnier T."/>
            <person name="Eiglmeier K."/>
            <person name="Camus J.-C."/>
            <person name="Medina N."/>
            <person name="Mansoor H."/>
            <person name="Pryor M."/>
            <person name="Duthoy S."/>
            <person name="Grondin S."/>
            <person name="Lacroix C."/>
            <person name="Monsempe C."/>
            <person name="Simon S."/>
            <person name="Harris B."/>
            <person name="Atkin R."/>
            <person name="Doggett J."/>
            <person name="Mayes R."/>
            <person name="Keating L."/>
            <person name="Wheeler P.R."/>
            <person name="Parkhill J."/>
            <person name="Barrell B.G."/>
            <person name="Cole S.T."/>
            <person name="Gordon S.V."/>
            <person name="Hewinson R.G."/>
        </authorList>
    </citation>
    <scope>NUCLEOTIDE SEQUENCE [LARGE SCALE GENOMIC DNA]</scope>
    <source>
        <strain>ATCC BAA-935 / AF2122/97</strain>
    </source>
</reference>
<reference key="2">
    <citation type="journal article" date="2017" name="Genome Announc.">
        <title>Updated reference genome sequence and annotation of Mycobacterium bovis AF2122/97.</title>
        <authorList>
            <person name="Malone K.M."/>
            <person name="Farrell D."/>
            <person name="Stuber T.P."/>
            <person name="Schubert O.T."/>
            <person name="Aebersold R."/>
            <person name="Robbe-Austerman S."/>
            <person name="Gordon S.V."/>
        </authorList>
    </citation>
    <scope>NUCLEOTIDE SEQUENCE [LARGE SCALE GENOMIC DNA]</scope>
    <scope>GENOME REANNOTATION</scope>
    <source>
        <strain>ATCC BAA-935 / AF2122/97</strain>
    </source>
</reference>
<sequence length="221" mass="24827">MRTVYHQRLTELAGRLGEMCSLAGIAMKRATQALLEADIGAAEQVIRDHERIVAMRAQVEKEAFALLALQHPVAGELREIFSAVQIIADTERMGALAVHIAKITRREYPNQVLPEEVRNCFADMAKVAIALGDSARQVLVNRDPQEAAQLHDRDDAMDDLHRHLLSVLIDREWRHGVRVGVETALLGRFFERFADHAVEVGRRVIFMVTGVLPTEDEISTY</sequence>
<organism>
    <name type="scientific">Mycobacterium bovis (strain ATCC BAA-935 / AF2122/97)</name>
    <dbReference type="NCBI Taxonomy" id="233413"/>
    <lineage>
        <taxon>Bacteria</taxon>
        <taxon>Bacillati</taxon>
        <taxon>Actinomycetota</taxon>
        <taxon>Actinomycetes</taxon>
        <taxon>Mycobacteriales</taxon>
        <taxon>Mycobacteriaceae</taxon>
        <taxon>Mycobacterium</taxon>
        <taxon>Mycobacterium tuberculosis complex</taxon>
    </lineage>
</organism>
<accession>P65719</accession>
<accession>A0A1R3Y401</accession>
<accession>O07167</accession>
<accession>X2BP11</accession>
<name>PHOU1_MYCBO</name>
<protein>
    <recommendedName>
        <fullName>Phosphate-specific transport system accessory protein PhoU homolog 1</fullName>
        <shortName>Pst system accessory protein PhoU homolog 1</shortName>
    </recommendedName>
</protein>